<reference key="1">
    <citation type="journal article" date="2003" name="Genomics">
        <title>A novel gene family encoding leucine-rich repeat transmembrane proteins differentially expressed in the nervous system.</title>
        <authorList>
            <person name="Lauren J."/>
            <person name="Airaksinen M.S."/>
            <person name="Saarma M."/>
            <person name="Timmusk T.T."/>
        </authorList>
    </citation>
    <scope>NUCLEOTIDE SEQUENCE [MRNA] (ISOFORM 2)</scope>
    <scope>TISSUE SPECIFICITY</scope>
</reference>
<reference key="2">
    <citation type="journal article" date="2003" name="Genome Res.">
        <title>The secreted protein discovery initiative (SPDI), a large-scale effort to identify novel human secreted and transmembrane proteins: a bioinformatics assessment.</title>
        <authorList>
            <person name="Clark H.F."/>
            <person name="Gurney A.L."/>
            <person name="Abaya E."/>
            <person name="Baker K."/>
            <person name="Baldwin D.T."/>
            <person name="Brush J."/>
            <person name="Chen J."/>
            <person name="Chow B."/>
            <person name="Chui C."/>
            <person name="Crowley C."/>
            <person name="Currell B."/>
            <person name="Deuel B."/>
            <person name="Dowd P."/>
            <person name="Eaton D."/>
            <person name="Foster J.S."/>
            <person name="Grimaldi C."/>
            <person name="Gu Q."/>
            <person name="Hass P.E."/>
            <person name="Heldens S."/>
            <person name="Huang A."/>
            <person name="Kim H.S."/>
            <person name="Klimowski L."/>
            <person name="Jin Y."/>
            <person name="Johnson S."/>
            <person name="Lee J."/>
            <person name="Lewis L."/>
            <person name="Liao D."/>
            <person name="Mark M.R."/>
            <person name="Robbie E."/>
            <person name="Sanchez C."/>
            <person name="Schoenfeld J."/>
            <person name="Seshagiri S."/>
            <person name="Simmons L."/>
            <person name="Singh J."/>
            <person name="Smith V."/>
            <person name="Stinson J."/>
            <person name="Vagts A."/>
            <person name="Vandlen R.L."/>
            <person name="Watanabe C."/>
            <person name="Wieand D."/>
            <person name="Woods K."/>
            <person name="Xie M.-H."/>
            <person name="Yansura D.G."/>
            <person name="Yi S."/>
            <person name="Yu G."/>
            <person name="Yuan J."/>
            <person name="Zhang M."/>
            <person name="Zhang Z."/>
            <person name="Goddard A.D."/>
            <person name="Wood W.I."/>
            <person name="Godowski P.J."/>
            <person name="Gray A.M."/>
        </authorList>
    </citation>
    <scope>NUCLEOTIDE SEQUENCE [LARGE SCALE MRNA] (ISOFORM 1)</scope>
</reference>
<reference key="3">
    <citation type="journal article" date="2004" name="Genome Res.">
        <title>The status, quality, and expansion of the NIH full-length cDNA project: the Mammalian Gene Collection (MGC).</title>
        <authorList>
            <consortium name="The MGC Project Team"/>
        </authorList>
    </citation>
    <scope>NUCLEOTIDE SEQUENCE [LARGE SCALE MRNA] (ISOFORM 2)</scope>
</reference>
<name>LRRT4_HUMAN</name>
<proteinExistence type="evidence at protein level"/>
<dbReference type="EMBL" id="AY182030">
    <property type="protein sequence ID" value="AAO67551.1"/>
    <property type="molecule type" value="mRNA"/>
</dbReference>
<dbReference type="EMBL" id="AY358324">
    <property type="protein sequence ID" value="AAQ88690.1"/>
    <property type="molecule type" value="mRNA"/>
</dbReference>
<dbReference type="EMBL" id="BC099738">
    <property type="protein sequence ID" value="AAH99738.1"/>
    <property type="molecule type" value="mRNA"/>
</dbReference>
<dbReference type="EMBL" id="BC110058">
    <property type="protein sequence ID" value="AAI10059.1"/>
    <property type="molecule type" value="mRNA"/>
</dbReference>
<dbReference type="CCDS" id="CCDS46346.1">
    <molecule id="Q86VH4-1"/>
</dbReference>
<dbReference type="CCDS" id="CCDS46347.1">
    <molecule id="Q86VH4-2"/>
</dbReference>
<dbReference type="RefSeq" id="NP_001128217.1">
    <molecule id="Q86VH4-1"/>
    <property type="nucleotide sequence ID" value="NM_001134745.3"/>
</dbReference>
<dbReference type="RefSeq" id="NP_001269853.1">
    <molecule id="Q86VH4-1"/>
    <property type="nucleotide sequence ID" value="NM_001282924.3"/>
</dbReference>
<dbReference type="RefSeq" id="NP_079269.4">
    <molecule id="Q86VH4-2"/>
    <property type="nucleotide sequence ID" value="NM_024993.5"/>
</dbReference>
<dbReference type="SMR" id="Q86VH4"/>
<dbReference type="BioGRID" id="123095">
    <property type="interactions" value="31"/>
</dbReference>
<dbReference type="FunCoup" id="Q86VH4">
    <property type="interactions" value="96"/>
</dbReference>
<dbReference type="IntAct" id="Q86VH4">
    <property type="interactions" value="28"/>
</dbReference>
<dbReference type="MINT" id="Q86VH4"/>
<dbReference type="STRING" id="9606.ENSP00000387228"/>
<dbReference type="TCDB" id="8.A.43.1.20">
    <property type="family name" value="the neat-domain containing methaemoglobin heme sequestration (n-mhs) family"/>
</dbReference>
<dbReference type="GlyCosmos" id="Q86VH4">
    <property type="glycosylation" value="3 sites, No reported glycans"/>
</dbReference>
<dbReference type="GlyGen" id="Q86VH4">
    <property type="glycosylation" value="4 sites, 2 N-linked glycans (2 sites), 1 O-linked glycan (1 site)"/>
</dbReference>
<dbReference type="iPTMnet" id="Q86VH4"/>
<dbReference type="PhosphoSitePlus" id="Q86VH4"/>
<dbReference type="BioMuta" id="LRRTM4"/>
<dbReference type="DMDM" id="166897996"/>
<dbReference type="jPOST" id="Q86VH4"/>
<dbReference type="MassIVE" id="Q86VH4"/>
<dbReference type="PaxDb" id="9606-ENSP00000386357"/>
<dbReference type="PeptideAtlas" id="Q86VH4"/>
<dbReference type="ProteomicsDB" id="70018">
    <molecule id="Q86VH4-1"/>
</dbReference>
<dbReference type="ProteomicsDB" id="70019">
    <molecule id="Q86VH4-2"/>
</dbReference>
<dbReference type="ABCD" id="Q86VH4">
    <property type="antibodies" value="1 sequenced antibody"/>
</dbReference>
<dbReference type="Antibodypedia" id="47484">
    <property type="antibodies" value="116 antibodies from 30 providers"/>
</dbReference>
<dbReference type="DNASU" id="80059"/>
<dbReference type="Ensembl" id="ENST00000409088.3">
    <molecule id="Q86VH4-2"/>
    <property type="protein sequence ID" value="ENSP00000386236.3"/>
    <property type="gene ID" value="ENSG00000176204.14"/>
</dbReference>
<dbReference type="Ensembl" id="ENST00000409093.1">
    <molecule id="Q86VH4-1"/>
    <property type="protein sequence ID" value="ENSP00000386357.1"/>
    <property type="gene ID" value="ENSG00000176204.14"/>
</dbReference>
<dbReference type="Ensembl" id="ENST00000409884.6">
    <molecule id="Q86VH4-1"/>
    <property type="protein sequence ID" value="ENSP00000387297.1"/>
    <property type="gene ID" value="ENSG00000176204.14"/>
</dbReference>
<dbReference type="GeneID" id="80059"/>
<dbReference type="KEGG" id="hsa:80059"/>
<dbReference type="MANE-Select" id="ENST00000409884.6">
    <property type="protein sequence ID" value="ENSP00000387297.1"/>
    <property type="RefSeq nucleotide sequence ID" value="NM_001134745.3"/>
    <property type="RefSeq protein sequence ID" value="NP_001128217.1"/>
</dbReference>
<dbReference type="UCSC" id="uc002snq.4">
    <molecule id="Q86VH4-1"/>
    <property type="organism name" value="human"/>
</dbReference>
<dbReference type="AGR" id="HGNC:19411"/>
<dbReference type="CTD" id="80059"/>
<dbReference type="DisGeNET" id="80059"/>
<dbReference type="GeneCards" id="LRRTM4"/>
<dbReference type="HGNC" id="HGNC:19411">
    <property type="gene designation" value="LRRTM4"/>
</dbReference>
<dbReference type="HPA" id="ENSG00000176204">
    <property type="expression patterns" value="Group enriched (brain, retina)"/>
</dbReference>
<dbReference type="MalaCards" id="LRRTM4"/>
<dbReference type="MIM" id="610870">
    <property type="type" value="gene"/>
</dbReference>
<dbReference type="neXtProt" id="NX_Q86VH4"/>
<dbReference type="OpenTargets" id="ENSG00000176204"/>
<dbReference type="PharmGKB" id="PA134972631"/>
<dbReference type="VEuPathDB" id="HostDB:ENSG00000176204"/>
<dbReference type="eggNOG" id="KOG0619">
    <property type="taxonomic scope" value="Eukaryota"/>
</dbReference>
<dbReference type="GeneTree" id="ENSGT00940000154909"/>
<dbReference type="HOGENOM" id="CLU_032965_0_0_1"/>
<dbReference type="InParanoid" id="Q86VH4"/>
<dbReference type="OMA" id="LWYCNPN"/>
<dbReference type="OrthoDB" id="10022853at2759"/>
<dbReference type="PAN-GO" id="Q86VH4">
    <property type="GO annotations" value="2 GO annotations based on evolutionary models"/>
</dbReference>
<dbReference type="PhylomeDB" id="Q86VH4"/>
<dbReference type="TreeFam" id="TF332659"/>
<dbReference type="PathwayCommons" id="Q86VH4"/>
<dbReference type="Reactome" id="R-HSA-6794361">
    <property type="pathway name" value="Neurexins and neuroligins"/>
</dbReference>
<dbReference type="SignaLink" id="Q86VH4"/>
<dbReference type="BioGRID-ORCS" id="80059">
    <property type="hits" value="15 hits in 1146 CRISPR screens"/>
</dbReference>
<dbReference type="ChiTaRS" id="LRRTM4">
    <property type="organism name" value="human"/>
</dbReference>
<dbReference type="GenomeRNAi" id="80059"/>
<dbReference type="Pharos" id="Q86VH4">
    <property type="development level" value="Tbio"/>
</dbReference>
<dbReference type="PRO" id="PR:Q86VH4"/>
<dbReference type="Proteomes" id="UP000005640">
    <property type="component" value="Chromosome 2"/>
</dbReference>
<dbReference type="RNAct" id="Q86VH4">
    <property type="molecule type" value="protein"/>
</dbReference>
<dbReference type="Bgee" id="ENSG00000176204">
    <property type="expression patterns" value="Expressed in secondary oocyte and 106 other cell types or tissues"/>
</dbReference>
<dbReference type="ExpressionAtlas" id="Q86VH4">
    <property type="expression patterns" value="baseline and differential"/>
</dbReference>
<dbReference type="GO" id="GO:0031012">
    <property type="term" value="C:extracellular matrix"/>
    <property type="evidence" value="ECO:0000318"/>
    <property type="project" value="GO_Central"/>
</dbReference>
<dbReference type="GO" id="GO:0005615">
    <property type="term" value="C:extracellular space"/>
    <property type="evidence" value="ECO:0000318"/>
    <property type="project" value="GO_Central"/>
</dbReference>
<dbReference type="GO" id="GO:0045211">
    <property type="term" value="C:postsynaptic membrane"/>
    <property type="evidence" value="ECO:0007669"/>
    <property type="project" value="UniProtKB-SubCell"/>
</dbReference>
<dbReference type="FunFam" id="3.80.10.10:FF:000005">
    <property type="entry name" value="leucine-rich repeat transmembrane neuronal protein 4"/>
    <property type="match status" value="1"/>
</dbReference>
<dbReference type="Gene3D" id="3.80.10.10">
    <property type="entry name" value="Ribonuclease Inhibitor"/>
    <property type="match status" value="1"/>
</dbReference>
<dbReference type="InterPro" id="IPR001611">
    <property type="entry name" value="Leu-rich_rpt"/>
</dbReference>
<dbReference type="InterPro" id="IPR003591">
    <property type="entry name" value="Leu-rich_rpt_typical-subtyp"/>
</dbReference>
<dbReference type="InterPro" id="IPR032675">
    <property type="entry name" value="LRR_dom_sf"/>
</dbReference>
<dbReference type="InterPro" id="IPR050333">
    <property type="entry name" value="SLRP"/>
</dbReference>
<dbReference type="PANTHER" id="PTHR45712">
    <property type="entry name" value="AGAP008170-PA"/>
    <property type="match status" value="1"/>
</dbReference>
<dbReference type="PANTHER" id="PTHR45712:SF22">
    <property type="entry name" value="INSULIN-LIKE GROWTH FACTOR-BINDING PROTEIN COMPLEX ACID LABILE SUBUNIT"/>
    <property type="match status" value="1"/>
</dbReference>
<dbReference type="Pfam" id="PF13855">
    <property type="entry name" value="LRR_8"/>
    <property type="match status" value="3"/>
</dbReference>
<dbReference type="PRINTS" id="PR00019">
    <property type="entry name" value="LEURICHRPT"/>
</dbReference>
<dbReference type="SMART" id="SM00369">
    <property type="entry name" value="LRR_TYP"/>
    <property type="match status" value="9"/>
</dbReference>
<dbReference type="SUPFAM" id="SSF52058">
    <property type="entry name" value="L domain-like"/>
    <property type="match status" value="1"/>
</dbReference>
<dbReference type="PROSITE" id="PS51450">
    <property type="entry name" value="LRR"/>
    <property type="match status" value="9"/>
</dbReference>
<feature type="signal peptide" evidence="2">
    <location>
        <begin position="1"/>
        <end position="30"/>
    </location>
</feature>
<feature type="chain" id="PRO_0000018358" description="Leucine-rich repeat transmembrane neuronal protein 4">
    <location>
        <begin position="31"/>
        <end position="590"/>
    </location>
</feature>
<feature type="topological domain" description="Extracellular" evidence="2">
    <location>
        <begin position="31"/>
        <end position="424"/>
    </location>
</feature>
<feature type="transmembrane region" description="Helical" evidence="2">
    <location>
        <begin position="425"/>
        <end position="445"/>
    </location>
</feature>
<feature type="topological domain" description="Cytoplasmic" evidence="2">
    <location>
        <begin position="446"/>
        <end position="590"/>
    </location>
</feature>
<feature type="domain" description="LRRNT">
    <location>
        <begin position="31"/>
        <end position="61"/>
    </location>
</feature>
<feature type="repeat" description="LRR 1">
    <location>
        <begin position="62"/>
        <end position="83"/>
    </location>
</feature>
<feature type="repeat" description="LRR 2">
    <location>
        <begin position="86"/>
        <end position="107"/>
    </location>
</feature>
<feature type="repeat" description="LRR 3">
    <location>
        <begin position="110"/>
        <end position="131"/>
    </location>
</feature>
<feature type="repeat" description="LRR 4">
    <location>
        <begin position="134"/>
        <end position="155"/>
    </location>
</feature>
<feature type="repeat" description="LRR 5">
    <location>
        <begin position="158"/>
        <end position="179"/>
    </location>
</feature>
<feature type="repeat" description="LRR 6">
    <location>
        <begin position="182"/>
        <end position="203"/>
    </location>
</feature>
<feature type="repeat" description="LRR 7">
    <location>
        <begin position="206"/>
        <end position="226"/>
    </location>
</feature>
<feature type="repeat" description="LRR 8">
    <location>
        <begin position="230"/>
        <end position="251"/>
    </location>
</feature>
<feature type="repeat" description="LRR 9">
    <location>
        <begin position="254"/>
        <end position="275"/>
    </location>
</feature>
<feature type="repeat" description="LRR 10">
    <location>
        <begin position="278"/>
        <end position="299"/>
    </location>
</feature>
<feature type="domain" description="LRRCT">
    <location>
        <begin position="311"/>
        <end position="362"/>
    </location>
</feature>
<feature type="glycosylation site" description="N-linked (GlcNAc...) asparagine" evidence="2">
    <location>
        <position position="58"/>
    </location>
</feature>
<feature type="glycosylation site" description="N-linked (GlcNAc...) asparagine" evidence="2">
    <location>
        <position position="126"/>
    </location>
</feature>
<feature type="glycosylation site" description="N-linked (GlcNAc...) asparagine" evidence="2">
    <location>
        <position position="291"/>
    </location>
</feature>
<feature type="splice variant" id="VSP_030989" description="In isoform 2." evidence="4 5">
    <original>M</original>
    <variation>V</variation>
    <location>
        <position position="518"/>
    </location>
</feature>
<feature type="splice variant" id="VSP_030990" description="In isoform 2." evidence="4 5">
    <location>
        <begin position="519"/>
        <end position="590"/>
    </location>
</feature>
<gene>
    <name type="primary">LRRTM4</name>
    <name type="ORF">UNQ3075/PRO9907</name>
</gene>
<keyword id="KW-0025">Alternative splicing</keyword>
<keyword id="KW-1003">Cell membrane</keyword>
<keyword id="KW-0325">Glycoprotein</keyword>
<keyword id="KW-0433">Leucine-rich repeat</keyword>
<keyword id="KW-0472">Membrane</keyword>
<keyword id="KW-0628">Postsynaptic cell membrane</keyword>
<keyword id="KW-1267">Proteomics identification</keyword>
<keyword id="KW-1185">Reference proteome</keyword>
<keyword id="KW-0677">Repeat</keyword>
<keyword id="KW-0732">Signal</keyword>
<keyword id="KW-0770">Synapse</keyword>
<keyword id="KW-0812">Transmembrane</keyword>
<keyword id="KW-1133">Transmembrane helix</keyword>
<comment type="function">
    <text evidence="1">May play a role in the development and maintenance of the vertebrate nervous system. Exhibits strong synaptogenic activity, restricted to excitatory presynaptic differentiation (By similarity).</text>
</comment>
<comment type="subunit">
    <text evidence="1">Peripherally associated with AMPAR complex. AMPAR complex consists of an inner core made of 4 pore-forming GluA/GRIA proteins (GRIA1, GRIA2, GRIA3 and GRIA4) and 4 major auxiliary subunits arranged in a twofold symmetry. One of the two pairs of distinct binding sites is occupied either by CNIH2, CNIH3 or CACNG2, CACNG3. The other harbors CACNG2, CACNG3, CACNG4, CACNG8 or GSG1L. This inner core of AMPAR complex is complemented by outer core constituents binding directly to the GluA/GRIA proteins at sites distinct from the interaction sites of the inner core constituents. Outer core constituents include at least PRRT1, PRRT2, CKAMP44/SHISA9, FRRS1L and NRN1. The proteins of the inner and outer core serve as a platform for other, more peripherally associated AMPAR constituents, including LRRTM4. Alone or in combination, these auxiliary subunits control the gating and pharmacology of the AMPAR complex and profoundly impact their biogenesis and protein processing (By similarity).</text>
</comment>
<comment type="subcellular location">
    <subcellularLocation>
        <location evidence="1">Cell membrane</location>
        <topology evidence="1">Single-pass type I membrane protein</topology>
    </subcellularLocation>
    <subcellularLocation>
        <location evidence="1">Postsynaptic cell membrane</location>
        <topology evidence="1">Single-pass type I membrane protein</topology>
    </subcellularLocation>
</comment>
<comment type="alternative products">
    <event type="alternative splicing"/>
    <isoform>
        <id>Q86VH4-1</id>
        <name>1</name>
        <sequence type="displayed"/>
    </isoform>
    <isoform>
        <id>Q86VH4-2</id>
        <name>2</name>
        <sequence type="described" ref="VSP_030989 VSP_030990"/>
    </isoform>
</comment>
<comment type="tissue specificity">
    <text evidence="3">Expressed in neuronal tissues.</text>
</comment>
<comment type="similarity">
    <text evidence="6">Belongs to the LRRTM family.</text>
</comment>
<sequence length="590" mass="67217">MGFHLITQLKGMSVVLVLLPTLLLVMLTGAQRACPKNCRCDGKIVYCESHAFADIPENISGGSQGLSLRFNSIQKLKSNQFAGLNQLIWLYLDHNYISSVDEDAFQGIRRLKELILSSNKITYLHNKTFHPVPNLRNLDLSYNKLQTLQSEQFKGLRKLIILHLRSNSLKTVPIRVFQDCRNLDFLDLGYNRLRSLSRNAFAGLLKLKELHLEHNQFSKINFAHFPRLFNLRSIYLQWNRIRSISQGLTWTWSSLHNLDLSGNDIQGIEPGTFKCLPNLQKLNLDSNKLTNISQETVNAWISLISITLSGNMWECSRSICPLFYWLKNFKGNKESTMICAGPKHIQGEKVSDAVETYNICSEVQVVNTERSHLVPQTPQKPLIIPRPTIFKPDVTQSTFETPSPSPGFQIPGAEQEYEHVSFHKIIAGSVALFLSVAMILLVIYVSWKRYPASMKQLQQHSLMKRRRKKARESERQMNSPLQEYYVDYKPTNSETMDISVNGSGPCTYTISGSRECEMPHHMKPLPYYSYDQPVIGYCQAHQPLHVTKGYETVSPEQDESPGLELGRDHSFIATIARSAAPAIYLERIAN</sequence>
<accession>Q86VH4</accession>
<accession>Q4FZ98</accession>
<accession>Q6UXJ7</accession>
<organism>
    <name type="scientific">Homo sapiens</name>
    <name type="common">Human</name>
    <dbReference type="NCBI Taxonomy" id="9606"/>
    <lineage>
        <taxon>Eukaryota</taxon>
        <taxon>Metazoa</taxon>
        <taxon>Chordata</taxon>
        <taxon>Craniata</taxon>
        <taxon>Vertebrata</taxon>
        <taxon>Euteleostomi</taxon>
        <taxon>Mammalia</taxon>
        <taxon>Eutheria</taxon>
        <taxon>Euarchontoglires</taxon>
        <taxon>Primates</taxon>
        <taxon>Haplorrhini</taxon>
        <taxon>Catarrhini</taxon>
        <taxon>Hominidae</taxon>
        <taxon>Homo</taxon>
    </lineage>
</organism>
<protein>
    <recommendedName>
        <fullName>Leucine-rich repeat transmembrane neuronal protein 4</fullName>
    </recommendedName>
</protein>
<evidence type="ECO:0000250" key="1"/>
<evidence type="ECO:0000255" key="2"/>
<evidence type="ECO:0000269" key="3">
    <source>
    </source>
</evidence>
<evidence type="ECO:0000303" key="4">
    <source>
    </source>
</evidence>
<evidence type="ECO:0000303" key="5">
    <source>
    </source>
</evidence>
<evidence type="ECO:0000305" key="6"/>